<keyword id="KW-0274">FAD</keyword>
<keyword id="KW-0285">Flavoprotein</keyword>
<keyword id="KW-0560">Oxidoreductase</keyword>
<sequence length="432" mass="47363">MRVVVLGSGVVGVTSAWYLCQAGHEVTVIDREPGSALETSAANAGQISPGYAAPWAAPGVPLKAIKWMFQRHAPLAISLDGTPSQLKWMWQMLRNCDTRHYMENKGRMVRLAEYSRDCLKTLRASTGIEYEGRQGGTLQLFRTAQQYENATRDIAVLEDAGVPYQLLDASQLAQVEPALAEVAHKLTGGLRLPNDETGDCQLFTQRLAKMCEQAGVTFRYNTPVDKLLSEGGKIYGVKCGDEVIKADSYVMAFGSYSTAMLKGLLDIPVYPLKGYSLTIPVKEDNGAPVSTILDETYKIAITRFDNRIRVGGMAEIVGFNTELLQPRRETLEMVVRDLFPRGGFIEQATFWTGLRPMTPDGTPIVGRTPFKNLWTNTGHGTLGWTMACGSGQLLSDLISGRTPAIPFDDLSAARYQSGFSPSRPQHLHGAHN</sequence>
<accession>A4WBF2</accession>
<evidence type="ECO:0000255" key="1">
    <source>
        <dbReference type="HAMAP-Rule" id="MF_01202"/>
    </source>
</evidence>
<protein>
    <recommendedName>
        <fullName evidence="1">D-amino acid dehydrogenase</fullName>
        <ecNumber evidence="1">1.4.99.-</ecNumber>
    </recommendedName>
</protein>
<dbReference type="EC" id="1.4.99.-" evidence="1"/>
<dbReference type="EMBL" id="CP000653">
    <property type="protein sequence ID" value="ABP61032.1"/>
    <property type="molecule type" value="Genomic_DNA"/>
</dbReference>
<dbReference type="RefSeq" id="WP_012017746.1">
    <property type="nucleotide sequence ID" value="NC_009436.1"/>
</dbReference>
<dbReference type="SMR" id="A4WBF2"/>
<dbReference type="STRING" id="399742.Ent638_2363"/>
<dbReference type="KEGG" id="ent:Ent638_2363"/>
<dbReference type="eggNOG" id="COG0665">
    <property type="taxonomic scope" value="Bacteria"/>
</dbReference>
<dbReference type="HOGENOM" id="CLU_007884_9_2_6"/>
<dbReference type="OrthoDB" id="9805337at2"/>
<dbReference type="UniPathway" id="UPA00043">
    <property type="reaction ID" value="UER00498"/>
</dbReference>
<dbReference type="Proteomes" id="UP000000230">
    <property type="component" value="Chromosome"/>
</dbReference>
<dbReference type="GO" id="GO:0005737">
    <property type="term" value="C:cytoplasm"/>
    <property type="evidence" value="ECO:0007669"/>
    <property type="project" value="TreeGrafter"/>
</dbReference>
<dbReference type="GO" id="GO:0005886">
    <property type="term" value="C:plasma membrane"/>
    <property type="evidence" value="ECO:0007669"/>
    <property type="project" value="TreeGrafter"/>
</dbReference>
<dbReference type="GO" id="GO:0008718">
    <property type="term" value="F:D-amino-acid dehydrogenase activity"/>
    <property type="evidence" value="ECO:0007669"/>
    <property type="project" value="UniProtKB-UniRule"/>
</dbReference>
<dbReference type="GO" id="GO:0055130">
    <property type="term" value="P:D-alanine catabolic process"/>
    <property type="evidence" value="ECO:0007669"/>
    <property type="project" value="UniProtKB-UniPathway"/>
</dbReference>
<dbReference type="FunFam" id="3.50.50.60:FF:000020">
    <property type="entry name" value="D-amino acid dehydrogenase"/>
    <property type="match status" value="1"/>
</dbReference>
<dbReference type="Gene3D" id="3.30.9.10">
    <property type="entry name" value="D-Amino Acid Oxidase, subunit A, domain 2"/>
    <property type="match status" value="1"/>
</dbReference>
<dbReference type="Gene3D" id="3.50.50.60">
    <property type="entry name" value="FAD/NAD(P)-binding domain"/>
    <property type="match status" value="2"/>
</dbReference>
<dbReference type="HAMAP" id="MF_01202">
    <property type="entry name" value="DadA"/>
    <property type="match status" value="1"/>
</dbReference>
<dbReference type="InterPro" id="IPR023080">
    <property type="entry name" value="DadA"/>
</dbReference>
<dbReference type="InterPro" id="IPR006076">
    <property type="entry name" value="FAD-dep_OxRdtase"/>
</dbReference>
<dbReference type="InterPro" id="IPR036188">
    <property type="entry name" value="FAD/NAD-bd_sf"/>
</dbReference>
<dbReference type="NCBIfam" id="NF001933">
    <property type="entry name" value="PRK00711.1"/>
    <property type="match status" value="1"/>
</dbReference>
<dbReference type="PANTHER" id="PTHR13847:SF280">
    <property type="entry name" value="D-AMINO ACID DEHYDROGENASE"/>
    <property type="match status" value="1"/>
</dbReference>
<dbReference type="PANTHER" id="PTHR13847">
    <property type="entry name" value="SARCOSINE DEHYDROGENASE-RELATED"/>
    <property type="match status" value="1"/>
</dbReference>
<dbReference type="Pfam" id="PF01266">
    <property type="entry name" value="DAO"/>
    <property type="match status" value="1"/>
</dbReference>
<dbReference type="SUPFAM" id="SSF54373">
    <property type="entry name" value="FAD-linked reductases, C-terminal domain"/>
    <property type="match status" value="1"/>
</dbReference>
<dbReference type="SUPFAM" id="SSF51905">
    <property type="entry name" value="FAD/NAD(P)-binding domain"/>
    <property type="match status" value="1"/>
</dbReference>
<feature type="chain" id="PRO_1000066093" description="D-amino acid dehydrogenase">
    <location>
        <begin position="1"/>
        <end position="432"/>
    </location>
</feature>
<feature type="binding site" evidence="1">
    <location>
        <begin position="3"/>
        <end position="17"/>
    </location>
    <ligand>
        <name>FAD</name>
        <dbReference type="ChEBI" id="CHEBI:57692"/>
    </ligand>
</feature>
<gene>
    <name evidence="1" type="primary">dadA</name>
    <name type="ordered locus">Ent638_2363</name>
</gene>
<reference key="1">
    <citation type="journal article" date="2010" name="PLoS Genet.">
        <title>Genome sequence of the plant growth promoting endophytic bacterium Enterobacter sp. 638.</title>
        <authorList>
            <person name="Taghavi S."/>
            <person name="van der Lelie D."/>
            <person name="Hoffman A."/>
            <person name="Zhang Y.B."/>
            <person name="Walla M.D."/>
            <person name="Vangronsveld J."/>
            <person name="Newman L."/>
            <person name="Monchy S."/>
        </authorList>
    </citation>
    <scope>NUCLEOTIDE SEQUENCE [LARGE SCALE GENOMIC DNA]</scope>
    <source>
        <strain>638</strain>
    </source>
</reference>
<comment type="function">
    <text evidence="1">Oxidative deamination of D-amino acids.</text>
</comment>
<comment type="catalytic activity">
    <reaction evidence="1">
        <text>a D-alpha-amino acid + A + H2O = a 2-oxocarboxylate + AH2 + NH4(+)</text>
        <dbReference type="Rhea" id="RHEA:18125"/>
        <dbReference type="ChEBI" id="CHEBI:13193"/>
        <dbReference type="ChEBI" id="CHEBI:15377"/>
        <dbReference type="ChEBI" id="CHEBI:17499"/>
        <dbReference type="ChEBI" id="CHEBI:28938"/>
        <dbReference type="ChEBI" id="CHEBI:35179"/>
        <dbReference type="ChEBI" id="CHEBI:59871"/>
    </reaction>
</comment>
<comment type="cofactor">
    <cofactor evidence="1">
        <name>FAD</name>
        <dbReference type="ChEBI" id="CHEBI:57692"/>
    </cofactor>
</comment>
<comment type="pathway">
    <text>Amino-acid degradation; D-alanine degradation; NH(3) and pyruvate from D-alanine: step 1/1.</text>
</comment>
<comment type="similarity">
    <text evidence="1">Belongs to the DadA oxidoreductase family.</text>
</comment>
<name>DADA_ENT38</name>
<organism>
    <name type="scientific">Enterobacter sp. (strain 638)</name>
    <dbReference type="NCBI Taxonomy" id="399742"/>
    <lineage>
        <taxon>Bacteria</taxon>
        <taxon>Pseudomonadati</taxon>
        <taxon>Pseudomonadota</taxon>
        <taxon>Gammaproteobacteria</taxon>
        <taxon>Enterobacterales</taxon>
        <taxon>Enterobacteriaceae</taxon>
        <taxon>Enterobacter</taxon>
    </lineage>
</organism>
<proteinExistence type="inferred from homology"/>